<feature type="chain" id="PRO_0000083519" description="Dynactin subunit 1">
    <location>
        <begin position="1"/>
        <end position="1281"/>
    </location>
</feature>
<feature type="domain" description="CAP-Gly" evidence="4">
    <location>
        <begin position="48"/>
        <end position="90"/>
    </location>
</feature>
<feature type="region of interest" description="Disordered" evidence="5">
    <location>
        <begin position="1"/>
        <end position="26"/>
    </location>
</feature>
<feature type="region of interest" description="Disordered" evidence="5">
    <location>
        <begin position="100"/>
        <end position="221"/>
    </location>
</feature>
<feature type="region of interest" description="Interaction with HPS6" evidence="12">
    <location>
        <begin position="911"/>
        <end position="1281"/>
    </location>
</feature>
<feature type="coiled-coil region" evidence="3">
    <location>
        <begin position="214"/>
        <end position="547"/>
    </location>
</feature>
<feature type="coiled-coil region" evidence="3">
    <location>
        <begin position="943"/>
        <end position="1049"/>
    </location>
</feature>
<feature type="coiled-coil region" evidence="3">
    <location>
        <begin position="1185"/>
        <end position="1214"/>
    </location>
</feature>
<feature type="compositionally biased region" description="Polar residues" evidence="5">
    <location>
        <begin position="10"/>
        <end position="22"/>
    </location>
</feature>
<feature type="compositionally biased region" description="Polar residues" evidence="5">
    <location>
        <begin position="102"/>
        <end position="114"/>
    </location>
</feature>
<feature type="compositionally biased region" description="Basic residues" evidence="5">
    <location>
        <begin position="129"/>
        <end position="152"/>
    </location>
</feature>
<feature type="compositionally biased region" description="Low complexity" evidence="5">
    <location>
        <begin position="161"/>
        <end position="205"/>
    </location>
</feature>
<feature type="modified residue" description="Phosphothreonine" evidence="2">
    <location>
        <position position="108"/>
    </location>
</feature>
<feature type="modified residue" description="Phosphothreonine" evidence="2">
    <location>
        <position position="145"/>
    </location>
</feature>
<feature type="modified residue" description="Phosphothreonine" evidence="2">
    <location>
        <position position="146"/>
    </location>
</feature>
<feature type="modified residue" description="Phosphothreonine" evidence="2">
    <location>
        <position position="147"/>
    </location>
</feature>
<feature type="modified residue" description="Phosphoserine; by PLK1" evidence="2">
    <location>
        <position position="179"/>
    </location>
</feature>
<feature type="modified residue" description="Phosphoserine; by CDK1" evidence="2">
    <location>
        <position position="212"/>
    </location>
</feature>
<feature type="splice variant" id="VSP_029584" description="In isoform 2." evidence="15">
    <location>
        <begin position="1049"/>
        <end position="1086"/>
    </location>
</feature>
<feature type="sequence conflict" description="In Ref. 2; BAE34241." evidence="16" ref="2">
    <original>R</original>
    <variation>W</variation>
    <location>
        <position position="406"/>
    </location>
</feature>
<feature type="sequence conflict" description="In Ref. 1; AAB57773." evidence="16" ref="1">
    <original>TKA</original>
    <variation>NKG</variation>
    <location>
        <begin position="721"/>
        <end position="723"/>
    </location>
</feature>
<feature type="sequence conflict" description="In Ref. 1; AAB57773." evidence="16" ref="1">
    <original>S</original>
    <variation>R</variation>
    <location>
        <position position="732"/>
    </location>
</feature>
<feature type="sequence conflict" description="In Ref. 2; BAE34241." evidence="16" ref="2">
    <original>I</original>
    <variation>V</variation>
    <location>
        <position position="1202"/>
    </location>
</feature>
<reference key="1">
    <citation type="journal article" date="1997" name="Biochem. Biophys. Res. Commun.">
        <title>Mouse p150Glued (dynactin 1) cDNA sequence and evaluation as a candidate for the neuromuscular disease mutation mnd2.</title>
        <authorList>
            <person name="Jang W."/>
            <person name="Weber J.S."/>
            <person name="Tokito M.K."/>
            <person name="Holzbaur E.L."/>
            <person name="Meisler M.H."/>
        </authorList>
    </citation>
    <scope>NUCLEOTIDE SEQUENCE [MRNA] (ISOFORM 1)</scope>
    <source>
        <strain>C57BL/6J</strain>
    </source>
</reference>
<reference key="2">
    <citation type="journal article" date="2005" name="Science">
        <title>The transcriptional landscape of the mammalian genome.</title>
        <authorList>
            <person name="Carninci P."/>
            <person name="Kasukawa T."/>
            <person name="Katayama S."/>
            <person name="Gough J."/>
            <person name="Frith M.C."/>
            <person name="Maeda N."/>
            <person name="Oyama R."/>
            <person name="Ravasi T."/>
            <person name="Lenhard B."/>
            <person name="Wells C."/>
            <person name="Kodzius R."/>
            <person name="Shimokawa K."/>
            <person name="Bajic V.B."/>
            <person name="Brenner S.E."/>
            <person name="Batalov S."/>
            <person name="Forrest A.R."/>
            <person name="Zavolan M."/>
            <person name="Davis M.J."/>
            <person name="Wilming L.G."/>
            <person name="Aidinis V."/>
            <person name="Allen J.E."/>
            <person name="Ambesi-Impiombato A."/>
            <person name="Apweiler R."/>
            <person name="Aturaliya R.N."/>
            <person name="Bailey T.L."/>
            <person name="Bansal M."/>
            <person name="Baxter L."/>
            <person name="Beisel K.W."/>
            <person name="Bersano T."/>
            <person name="Bono H."/>
            <person name="Chalk A.M."/>
            <person name="Chiu K.P."/>
            <person name="Choudhary V."/>
            <person name="Christoffels A."/>
            <person name="Clutterbuck D.R."/>
            <person name="Crowe M.L."/>
            <person name="Dalla E."/>
            <person name="Dalrymple B.P."/>
            <person name="de Bono B."/>
            <person name="Della Gatta G."/>
            <person name="di Bernardo D."/>
            <person name="Down T."/>
            <person name="Engstrom P."/>
            <person name="Fagiolini M."/>
            <person name="Faulkner G."/>
            <person name="Fletcher C.F."/>
            <person name="Fukushima T."/>
            <person name="Furuno M."/>
            <person name="Futaki S."/>
            <person name="Gariboldi M."/>
            <person name="Georgii-Hemming P."/>
            <person name="Gingeras T.R."/>
            <person name="Gojobori T."/>
            <person name="Green R.E."/>
            <person name="Gustincich S."/>
            <person name="Harbers M."/>
            <person name="Hayashi Y."/>
            <person name="Hensch T.K."/>
            <person name="Hirokawa N."/>
            <person name="Hill D."/>
            <person name="Huminiecki L."/>
            <person name="Iacono M."/>
            <person name="Ikeo K."/>
            <person name="Iwama A."/>
            <person name="Ishikawa T."/>
            <person name="Jakt M."/>
            <person name="Kanapin A."/>
            <person name="Katoh M."/>
            <person name="Kawasawa Y."/>
            <person name="Kelso J."/>
            <person name="Kitamura H."/>
            <person name="Kitano H."/>
            <person name="Kollias G."/>
            <person name="Krishnan S.P."/>
            <person name="Kruger A."/>
            <person name="Kummerfeld S.K."/>
            <person name="Kurochkin I.V."/>
            <person name="Lareau L.F."/>
            <person name="Lazarevic D."/>
            <person name="Lipovich L."/>
            <person name="Liu J."/>
            <person name="Liuni S."/>
            <person name="McWilliam S."/>
            <person name="Madan Babu M."/>
            <person name="Madera M."/>
            <person name="Marchionni L."/>
            <person name="Matsuda H."/>
            <person name="Matsuzawa S."/>
            <person name="Miki H."/>
            <person name="Mignone F."/>
            <person name="Miyake S."/>
            <person name="Morris K."/>
            <person name="Mottagui-Tabar S."/>
            <person name="Mulder N."/>
            <person name="Nakano N."/>
            <person name="Nakauchi H."/>
            <person name="Ng P."/>
            <person name="Nilsson R."/>
            <person name="Nishiguchi S."/>
            <person name="Nishikawa S."/>
            <person name="Nori F."/>
            <person name="Ohara O."/>
            <person name="Okazaki Y."/>
            <person name="Orlando V."/>
            <person name="Pang K.C."/>
            <person name="Pavan W.J."/>
            <person name="Pavesi G."/>
            <person name="Pesole G."/>
            <person name="Petrovsky N."/>
            <person name="Piazza S."/>
            <person name="Reed J."/>
            <person name="Reid J.F."/>
            <person name="Ring B.Z."/>
            <person name="Ringwald M."/>
            <person name="Rost B."/>
            <person name="Ruan Y."/>
            <person name="Salzberg S.L."/>
            <person name="Sandelin A."/>
            <person name="Schneider C."/>
            <person name="Schoenbach C."/>
            <person name="Sekiguchi K."/>
            <person name="Semple C.A."/>
            <person name="Seno S."/>
            <person name="Sessa L."/>
            <person name="Sheng Y."/>
            <person name="Shibata Y."/>
            <person name="Shimada H."/>
            <person name="Shimada K."/>
            <person name="Silva D."/>
            <person name="Sinclair B."/>
            <person name="Sperling S."/>
            <person name="Stupka E."/>
            <person name="Sugiura K."/>
            <person name="Sultana R."/>
            <person name="Takenaka Y."/>
            <person name="Taki K."/>
            <person name="Tammoja K."/>
            <person name="Tan S.L."/>
            <person name="Tang S."/>
            <person name="Taylor M.S."/>
            <person name="Tegner J."/>
            <person name="Teichmann S.A."/>
            <person name="Ueda H.R."/>
            <person name="van Nimwegen E."/>
            <person name="Verardo R."/>
            <person name="Wei C.L."/>
            <person name="Yagi K."/>
            <person name="Yamanishi H."/>
            <person name="Zabarovsky E."/>
            <person name="Zhu S."/>
            <person name="Zimmer A."/>
            <person name="Hide W."/>
            <person name="Bult C."/>
            <person name="Grimmond S.M."/>
            <person name="Teasdale R.D."/>
            <person name="Liu E.T."/>
            <person name="Brusic V."/>
            <person name="Quackenbush J."/>
            <person name="Wahlestedt C."/>
            <person name="Mattick J.S."/>
            <person name="Hume D.A."/>
            <person name="Kai C."/>
            <person name="Sasaki D."/>
            <person name="Tomaru Y."/>
            <person name="Fukuda S."/>
            <person name="Kanamori-Katayama M."/>
            <person name="Suzuki M."/>
            <person name="Aoki J."/>
            <person name="Arakawa T."/>
            <person name="Iida J."/>
            <person name="Imamura K."/>
            <person name="Itoh M."/>
            <person name="Kato T."/>
            <person name="Kawaji H."/>
            <person name="Kawagashira N."/>
            <person name="Kawashima T."/>
            <person name="Kojima M."/>
            <person name="Kondo S."/>
            <person name="Konno H."/>
            <person name="Nakano K."/>
            <person name="Ninomiya N."/>
            <person name="Nishio T."/>
            <person name="Okada M."/>
            <person name="Plessy C."/>
            <person name="Shibata K."/>
            <person name="Shiraki T."/>
            <person name="Suzuki S."/>
            <person name="Tagami M."/>
            <person name="Waki K."/>
            <person name="Watahiki A."/>
            <person name="Okamura-Oho Y."/>
            <person name="Suzuki H."/>
            <person name="Kawai J."/>
            <person name="Hayashizaki Y."/>
        </authorList>
    </citation>
    <scope>NUCLEOTIDE SEQUENCE [LARGE SCALE MRNA] (ISOFORM 2)</scope>
    <source>
        <strain>C57BL/6J</strain>
        <tissue>Inner ear</tissue>
    </source>
</reference>
<reference key="3">
    <citation type="journal article" date="2009" name="PLoS Biol.">
        <title>Lineage-specific biology revealed by a finished genome assembly of the mouse.</title>
        <authorList>
            <person name="Church D.M."/>
            <person name="Goodstadt L."/>
            <person name="Hillier L.W."/>
            <person name="Zody M.C."/>
            <person name="Goldstein S."/>
            <person name="She X."/>
            <person name="Bult C.J."/>
            <person name="Agarwala R."/>
            <person name="Cherry J.L."/>
            <person name="DiCuccio M."/>
            <person name="Hlavina W."/>
            <person name="Kapustin Y."/>
            <person name="Meric P."/>
            <person name="Maglott D."/>
            <person name="Birtle Z."/>
            <person name="Marques A.C."/>
            <person name="Graves T."/>
            <person name="Zhou S."/>
            <person name="Teague B."/>
            <person name="Potamousis K."/>
            <person name="Churas C."/>
            <person name="Place M."/>
            <person name="Herschleb J."/>
            <person name="Runnheim R."/>
            <person name="Forrest D."/>
            <person name="Amos-Landgraf J."/>
            <person name="Schwartz D.C."/>
            <person name="Cheng Z."/>
            <person name="Lindblad-Toh K."/>
            <person name="Eichler E.E."/>
            <person name="Ponting C.P."/>
        </authorList>
    </citation>
    <scope>NUCLEOTIDE SEQUENCE [LARGE SCALE GENOMIC DNA]</scope>
    <source>
        <strain>C57BL/6J</strain>
    </source>
</reference>
<reference key="4">
    <citation type="journal article" date="2003" name="J. Cell Biol.">
        <title>BPAG1n4 is essential for retrograde axonal transport in sensory neurons.</title>
        <authorList>
            <person name="Liu J.J."/>
            <person name="Ding J."/>
            <person name="Kowal A.S."/>
            <person name="Nardine T."/>
            <person name="Allen E."/>
            <person name="Delcroix J.D."/>
            <person name="Wu C."/>
            <person name="Mobley W."/>
            <person name="Fuchs E."/>
            <person name="Yang Y."/>
        </authorList>
    </citation>
    <scope>INTERACTION WITH DST (ISOFORM 1)</scope>
</reference>
<reference key="5">
    <citation type="journal article" date="2006" name="J. Cell Biol.">
        <title>Tubulin tyrosination is a major factor affecting the recruitment of CAP-Gly proteins at microtubule plus ends.</title>
        <authorList>
            <person name="Peris L."/>
            <person name="Thery M."/>
            <person name="Faure J."/>
            <person name="Saoudi Y."/>
            <person name="Lafanechere L."/>
            <person name="Chilton J.K."/>
            <person name="Gordon-Weeks P."/>
            <person name="Galjart N."/>
            <person name="Bornens M."/>
            <person name="Wordeman L."/>
            <person name="Wehland J."/>
            <person name="Andrieux A."/>
            <person name="Job D."/>
        </authorList>
    </citation>
    <scope>SUBCELLULAR LOCATION</scope>
    <scope>ASSOCIATION WITH MICROTUBULES</scope>
</reference>
<reference key="6">
    <citation type="journal article" date="2009" name="Cell Res.">
        <title>The retromer component SNX6 interacts with dynactin p150(Glued) and mediates endosome-to-TGN transport.</title>
        <authorList>
            <person name="Hong Z."/>
            <person name="Yang Y."/>
            <person name="Zhang C."/>
            <person name="Niu Y."/>
            <person name="Li K."/>
            <person name="Zhao X."/>
            <person name="Liu J.J."/>
        </authorList>
    </citation>
    <scope>INTERACTION WITH SNX6</scope>
</reference>
<reference key="7">
    <citation type="journal article" date="2010" name="Cell">
        <title>A tissue-specific atlas of mouse protein phosphorylation and expression.</title>
        <authorList>
            <person name="Huttlin E.L."/>
            <person name="Jedrychowski M.P."/>
            <person name="Elias J.E."/>
            <person name="Goswami T."/>
            <person name="Rad R."/>
            <person name="Beausoleil S.A."/>
            <person name="Villen J."/>
            <person name="Haas W."/>
            <person name="Sowa M.E."/>
            <person name="Gygi S.P."/>
        </authorList>
    </citation>
    <scope>IDENTIFICATION BY MASS SPECTROMETRY [LARGE SCALE ANALYSIS]</scope>
    <source>
        <tissue>Brain</tissue>
        <tissue>Brown adipose tissue</tissue>
        <tissue>Heart</tissue>
        <tissue>Kidney</tissue>
        <tissue>Liver</tissue>
        <tissue>Lung</tissue>
        <tissue>Pancreas</tissue>
        <tissue>Spleen</tissue>
        <tissue>Testis</tissue>
    </source>
</reference>
<reference key="8">
    <citation type="journal article" date="2012" name="J. Cell Sci.">
        <title>Melanoregulin regulates retrograde melanosome transport through interaction with the RILP-p150Glued complex in melanocytes.</title>
        <authorList>
            <person name="Ohbayashi N."/>
            <person name="Maruta Y."/>
            <person name="Ishida M."/>
            <person name="Fukuda M."/>
        </authorList>
    </citation>
    <scope>IDENTIFICATION IN A COMPLEX WITH MREG AND RILP</scope>
</reference>
<reference key="9">
    <citation type="journal article" date="2012" name="Mol. Biol. Cell">
        <title>BICD2, dynactin, and LIS1 cooperate in regulating dynein recruitment to cellular structures.</title>
        <authorList>
            <person name="Splinter D."/>
            <person name="Razafsky D.S."/>
            <person name="Schlager M.A."/>
            <person name="Serra-Marques A."/>
            <person name="Grigoriev I."/>
            <person name="Demmers J."/>
            <person name="Keijzer N."/>
            <person name="Jiang K."/>
            <person name="Poser I."/>
            <person name="Hyman A.A."/>
            <person name="Hoogenraad C.C."/>
            <person name="King S.J."/>
            <person name="Akhmanova A."/>
        </authorList>
    </citation>
    <scope>INTERACTION WITH BICD2</scope>
</reference>
<reference key="10">
    <citation type="journal article" date="2013" name="EMBO J.">
        <title>Kif3a interacts with Dynactin subunit p150 Glued to organize centriole subdistal appendages.</title>
        <authorList>
            <person name="Kodani A."/>
            <person name="Salome Sirerol-Piquer M."/>
            <person name="Seol A."/>
            <person name="Garcia-Verdugo J.M."/>
            <person name="Reiter J.F."/>
        </authorList>
    </citation>
    <scope>INTERACTION WITH KIF3A</scope>
    <scope>SUBCELLULAR LOCATION</scope>
</reference>
<reference key="11">
    <citation type="journal article" date="2014" name="J. Cell Sci.">
        <title>HPS6 interacts with dynactin p150Glued to mediate retrograde trafficking and maturation of lysosomes.</title>
        <authorList>
            <person name="Li K."/>
            <person name="Yang L."/>
            <person name="Zhang C."/>
            <person name="Niu Y."/>
            <person name="Li W."/>
            <person name="Liu J.J."/>
        </authorList>
    </citation>
    <scope>INTERACTION WITH HPS6</scope>
</reference>
<reference key="12">
    <citation type="journal article" date="2016" name="Biochem. J.">
        <title>Inositol hexakisphosphate kinase 1 (IP6K1) activity is required for cytoplasmic dynein-driven transport.</title>
        <authorList>
            <person name="Chanduri M."/>
            <person name="Rai A."/>
            <person name="Malla A.B."/>
            <person name="Wu M."/>
            <person name="Fiedler D."/>
            <person name="Mallik R."/>
            <person name="Bhandari R."/>
        </authorList>
    </citation>
    <scope>INTERACTION WITH DYNC1I2</scope>
</reference>
<reference key="13">
    <citation type="journal article" date="2019" name="Nature">
        <title>The centrosome protein AKNA regulates neurogenesis via microtubule organization.</title>
        <authorList>
            <person name="Camargo Ortega G."/>
            <person name="Falk S."/>
            <person name="Johansson P.A."/>
            <person name="Peyre E."/>
            <person name="Broix L."/>
            <person name="Sahu S.K."/>
            <person name="Hirst W."/>
            <person name="Schlichthaerle T."/>
            <person name="De Juan Romero C."/>
            <person name="Draganova K."/>
            <person name="Vinopal S."/>
            <person name="Chinnappa K."/>
            <person name="Gavranovic A."/>
            <person name="Karakaya T."/>
            <person name="Steininger T."/>
            <person name="Merl-Pham J."/>
            <person name="Feederle R."/>
            <person name="Shao W."/>
            <person name="Shi S.H."/>
            <person name="Hauck S.M."/>
            <person name="Jungmann R."/>
            <person name="Bradke F."/>
            <person name="Borrell V."/>
            <person name="Geerlof A."/>
            <person name="Reber S."/>
            <person name="Tiwari V.K."/>
            <person name="Huttner W.B."/>
            <person name="Wilsch-Braeuninger M."/>
            <person name="Nguyen L."/>
            <person name="Goetz M."/>
        </authorList>
    </citation>
    <scope>INTERACTION WITH AKNA</scope>
</reference>
<accession>O08788</accession>
<accession>E9QLJ1</accession>
<accession>Q3TZG7</accession>
<name>DCTN1_MOUSE</name>
<comment type="function">
    <text evidence="1 2">Part of the dynactin complex that activates the molecular motor dynein for ultra-processive transport along microtubules (By similarity). Plays a key role in dynein-mediated retrograde transport of vesicles and organelles along microtubules by recruiting and tethering dynein to microtubules. Binds to both dynein and microtubules providing a link between specific cargos, microtubules and dynein. Essential for targeting dynein to microtubule plus ends, recruiting dynein to membranous cargos and enhancing dynein processivity (the ability to move along a microtubule for a long distance without falling off the track). Can also act as a brake to slow the dynein motor during motility along the microtubule. Can regulate microtubule stability by promoting microtubule formation, nucleation and polymerization and by inhibiting microtubule catastrophe in neurons. Inhibits microtubule catastrophe by binding both to microtubules and to tubulin, leading to enhanced microtubule stability along the axon. Plays a role in metaphase spindle orientation. Plays a role in centriole cohesion and subdistal appendage organization and function. Its recruitment to the centriole in a KIF3A-dependent manner is essential for the maintenance of centriole cohesion and the formation of subdistal appendage. Also required for microtubule anchoring at the mother centriole. Plays a role in primary cilia formation (By similarity).</text>
</comment>
<comment type="subunit">
    <text evidence="1 2 6 7 8 9 10 11 12 13 14">Monomer and homodimer (By similarity). Subunit of dynactin, a multiprotein complex part of a tripartite complex with dynein and a adapter, such as BICDL1, BICD2 or HOOK3. The dynactin complex is built around ACTR1A/ACTB filament and consists of an actin-related filament composed of a shoulder domain, a pointed end and a barbed end. Its length is defined by its flexible shoulder domain. The soulder is composed of 2 DCTN1 subunits, 4 DCTN2 and 2 DCTN3. DCTN1/p150(glued) binds directly to microtubules and to cytoplasmic dynein. The 4 DCNT2 (via N-terminus) bind the ACTR1A filament and act as molecular rulers to determine the length. The pointed end is important for binding dynein-dynactin cargo adapters. Consists of 4 subunits: ACTR10, DCNT4, DCTN5 and DCTN6. The barbed end is composed of a CAPZA1:CAPZB heterodimers, which binds ACTR1A/ACTB filament and dynactin and stabilizes dynactin (By similarity). Interacts with the C-terminus of MAPRE1, MAPRE2 and MAPRE3. Interacts with FBXL5. Interacts with ECPAS. Interacts with CLIP1. Interacts with CLN3 and DYNAP. Interacts with MISP; this interaction regulates its distribution at the cell cortex. Interacts with CEP131. Interacts with CEP126. Interacts with dynein intermediate chain and dynein heavy chain. Interacts with PLK1 (via POLO-box domain). Interacts with TBCB and PARD6A (By similarity). Binds preferentially to tyrosinated microtubules than to detyrosinated microtubules (PubMed:16954346). Interacts with KIF3A (PubMed:23386061). Interacts with HPS6 (PubMed:25189619). Interacts with SNX6 (PubMed:19935774). Interacts with BICD2 (PubMed:22956769). Interacts with DST (isoform 1) (PubMed:14581450). Identified in a complex with MREG and RILP (PubMed:22275436). Interacts with BCCIP. Interacts with DCDC1 (By similarity). Interacts with AKNA (PubMed:30787442). Interacts with DYNC1I2 (PubMed:27474409). Interacts with RUFY3 and RUFY4 (By similarity).</text>
</comment>
<comment type="interaction">
    <interactant intactId="EBI-776180">
        <id>O08788</id>
    </interactant>
    <interactant intactId="EBI-1811999">
        <id>Q6A078</id>
        <label>Cep290</label>
    </interactant>
    <organismsDiffer>false</organismsDiffer>
    <experiments>2</experiments>
</comment>
<comment type="interaction">
    <interactant intactId="EBI-776180">
        <id>O08788</id>
    </interactant>
    <interactant intactId="EBI-6169413">
        <id>P28741</id>
        <label>Kif3a</label>
    </interactant>
    <organismsDiffer>false</organismsDiffer>
    <experiments>4</experiments>
</comment>
<comment type="interaction">
    <interactant intactId="EBI-776180">
        <id>O08788</id>
    </interactant>
    <interactant intactId="EBI-349710">
        <id>P33175</id>
        <label>Kif5a</label>
    </interactant>
    <organismsDiffer>false</organismsDiffer>
    <experiments>2</experiments>
</comment>
<comment type="subcellular location">
    <subcellularLocation>
        <location evidence="2">Cytoplasm</location>
    </subcellularLocation>
    <subcellularLocation>
        <location evidence="7">Cytoplasm</location>
        <location evidence="7">Cytoskeleton</location>
    </subcellularLocation>
    <subcellularLocation>
        <location evidence="2">Cytoplasm</location>
        <location evidence="2">Cytoskeleton</location>
        <location evidence="2">Microtubule organizing center</location>
        <location evidence="2">Centrosome</location>
    </subcellularLocation>
    <subcellularLocation>
        <location evidence="11">Cytoplasm</location>
        <location evidence="11">Cytoskeleton</location>
        <location evidence="11">Microtubule organizing center</location>
        <location evidence="11">Centrosome</location>
        <location evidence="11">Centriole</location>
    </subcellularLocation>
    <subcellularLocation>
        <location evidence="2">Cytoplasm</location>
        <location evidence="2">Cytoskeleton</location>
        <location evidence="2">Spindle</location>
    </subcellularLocation>
    <subcellularLocation>
        <location evidence="2">Nucleus envelope</location>
    </subcellularLocation>
    <subcellularLocation>
        <location evidence="2">Cytoplasm</location>
        <location evidence="2">Cell cortex</location>
    </subcellularLocation>
    <text evidence="2 7 11">Localizes to microtubule plus ends. Localizes preferentially to the ends of tyrosinated microtubules (PubMed:16954346). Localization at centrosome is regulated by SLK-dependent phosphorylation. Localizes to centrosome in a PARKDA-dependent manner. PLK1-mediated phosphorylation at Ser-179 is essential for its localization in the nuclear envelope (By similarity). Localizes to the subdistal appendage region of the centriole in a KIF3A-dependent manner (PubMed:23386061).</text>
</comment>
<comment type="alternative products">
    <event type="alternative splicing"/>
    <isoform>
        <id>O08788-1</id>
        <name>1</name>
        <sequence type="displayed"/>
    </isoform>
    <isoform>
        <id>O08788-2</id>
        <name>2</name>
        <sequence type="described" ref="VSP_029584"/>
    </isoform>
</comment>
<comment type="domain">
    <text evidence="2">The CAP-Gly domain is essential for interactions with microtubules and its binding partners and for its motion along the microtubules. Essential for its preferential binding to tyrosinated microtubules and for promoting the sustained interaction of the dynein motor with microtubules.</text>
</comment>
<comment type="PTM">
    <text evidence="2">Ubiquitinated by a SCF complex containing FBXL5, leading to its degradation by the proteasome.</text>
</comment>
<comment type="PTM">
    <text evidence="2">Phosphorylation by SLK at Thr-145, Thr-146 and Thr-147 targets DCTN1 to the centrosome. It is uncertain if SLK phosphorylates all three threonines or one or two of them. PLK1-mediated phosphorylation at Ser-179 is essential for its localization in the nuclear envelope and promotes its dissociation from microtubules during early mitosis and positively regulates nuclear envelope breakdown during prophase.</text>
</comment>
<comment type="similarity">
    <text evidence="16">Belongs to the dynactin 150 kDa subunit family.</text>
</comment>
<sequence length="1281" mass="141676">MAQSRRHMSSRTPSGSRMSTEASARPLRVGSRVEVIGKGHRGTVAYVGATLFATGKWVGVILDEAKGKNDGTVQGRKYFTCDEGHGIFVRQSQIQVFEDGADTTSPETPDSSASKVLKREGADAAAKTSKLRGLKPKKAPTARKTTTRRPKPTRPASTGVAGPSSSLGPSGSASAGELSSSEPSTPAQTPLAAPIIPTPALTSPGAAPPLPSPSKEEEGLRAQVRDLEEKLETLRLKRSEDKAKLKELEKHKIQLEQVQEWKSKMQEQQADLQRRLKEARKEAKEALEAKERYMEEMADTADAIEMATLDKEMAEERAESLQQEVEALKERVDELTTDLEILKAEIEEKGSDGAASSYQLKQLEEQNARLKDALVRMRDLSSSEKQEHVKLQKLMEKKNQELEVVRQQRERLQEELSQAESTIDELKEQVDAALGAEEMVEMLTDRNLNLEEKVRELRETVGDLEAMNEMNDELQENARETELELREQLDMAGARVREAQKRVEAAQETVADYQQTIKKYRQLTAHLQDVNRELTNQQEASVERQQQPPPETFDFKIKFAETKAHAKAIEMELRQMEVAQANRHMSLLTAFMPDSFLRPGGDHDCVLVLLLMPRLICKAELIRKQAQEKFDLSENCSERPGLRGAAGEQLSFAAGLVYSLSLLQATLHRYEHALSQCSVDVYKKVGSLYPEMSAHERSLDFLIELLHKDQLDETVNVEPLTKAIKYYQHLYSIHLAEQPEDSTMQLADHIKFTQSALDCMGVEVGRLRAFLQGGQEATDIALLLRDLETSCSDTRQFCKKIRRRMPGTDAPGIPAALAFGSQVSDTLLDCRKHLTWVVAVLQEVAAAAAQLIAPLAENEGLPVAALEELAFKASEQIYGSPSSSPYECLRQSCTILISTMNKLATAMQEGEYDAERPPSKPPPVELRAAALRAEITDAEGLGLKLEDRETVIKELKKSLKIKGEELSEANVRLSLLEKKLDSAAKDADERIEKVQTRLDETQTLLRKKEKDFEETMDALQADIDQLEAEKAELKQRLNSQSKRTIEGLRGPPPSGIATLVSGIAGEEPQRGGAPGQAPGALPGPGLVKDSPLLLQQISAMRLHISQLQHENSILRGAQMKASLAALPPLHVAKLSLPPHEGPGGNLVAGALYRKTSQLLEKLNQLSTHTHVVDITRSSPAAKSPSAQLMEQVAQLKSLSDTIEKLKDEVLKETVTQRPGATVPTDFATFPSSAFLRAKEEQQDDTVYMGKVTFSCAAGLGQRHRLVLTQEQLHQLHSRLIS</sequence>
<gene>
    <name type="primary">Dctn1</name>
</gene>
<evidence type="ECO:0000250" key="1">
    <source>
        <dbReference type="UniProtKB" id="A0A287B8J2"/>
    </source>
</evidence>
<evidence type="ECO:0000250" key="2">
    <source>
        <dbReference type="UniProtKB" id="Q14203"/>
    </source>
</evidence>
<evidence type="ECO:0000255" key="3"/>
<evidence type="ECO:0000255" key="4">
    <source>
        <dbReference type="PROSITE-ProRule" id="PRU00045"/>
    </source>
</evidence>
<evidence type="ECO:0000256" key="5">
    <source>
        <dbReference type="SAM" id="MobiDB-lite"/>
    </source>
</evidence>
<evidence type="ECO:0000269" key="6">
    <source>
    </source>
</evidence>
<evidence type="ECO:0000269" key="7">
    <source>
    </source>
</evidence>
<evidence type="ECO:0000269" key="8">
    <source>
    </source>
</evidence>
<evidence type="ECO:0000269" key="9">
    <source>
    </source>
</evidence>
<evidence type="ECO:0000269" key="10">
    <source>
    </source>
</evidence>
<evidence type="ECO:0000269" key="11">
    <source>
    </source>
</evidence>
<evidence type="ECO:0000269" key="12">
    <source>
    </source>
</evidence>
<evidence type="ECO:0000269" key="13">
    <source>
    </source>
</evidence>
<evidence type="ECO:0000269" key="14">
    <source>
    </source>
</evidence>
<evidence type="ECO:0000303" key="15">
    <source>
    </source>
</evidence>
<evidence type="ECO:0000305" key="16"/>
<keyword id="KW-0025">Alternative splicing</keyword>
<keyword id="KW-0131">Cell cycle</keyword>
<keyword id="KW-0132">Cell division</keyword>
<keyword id="KW-0175">Coiled coil</keyword>
<keyword id="KW-0963">Cytoplasm</keyword>
<keyword id="KW-0206">Cytoskeleton</keyword>
<keyword id="KW-0243">Dynein</keyword>
<keyword id="KW-0493">Microtubule</keyword>
<keyword id="KW-0498">Mitosis</keyword>
<keyword id="KW-0539">Nucleus</keyword>
<keyword id="KW-0597">Phosphoprotein</keyword>
<keyword id="KW-1185">Reference proteome</keyword>
<keyword id="KW-0813">Transport</keyword>
<keyword id="KW-0832">Ubl conjugation</keyword>
<proteinExistence type="evidence at protein level"/>
<dbReference type="EMBL" id="U60312">
    <property type="protein sequence ID" value="AAB57773.1"/>
    <property type="molecule type" value="mRNA"/>
</dbReference>
<dbReference type="EMBL" id="AK157867">
    <property type="protein sequence ID" value="BAE34241.1"/>
    <property type="molecule type" value="mRNA"/>
</dbReference>
<dbReference type="EMBL" id="AC160400">
    <property type="status" value="NOT_ANNOTATED_CDS"/>
    <property type="molecule type" value="Genomic_DNA"/>
</dbReference>
<dbReference type="CCDS" id="CCDS39532.1">
    <molecule id="O08788-1"/>
</dbReference>
<dbReference type="PIR" id="JC5368">
    <property type="entry name" value="JC5368"/>
</dbReference>
<dbReference type="RefSeq" id="NP_031861.2">
    <molecule id="O08788-1"/>
    <property type="nucleotide sequence ID" value="NM_007835.3"/>
</dbReference>
<dbReference type="BMRB" id="O08788"/>
<dbReference type="SMR" id="O08788"/>
<dbReference type="BioGRID" id="199072">
    <property type="interactions" value="74"/>
</dbReference>
<dbReference type="CORUM" id="O08788"/>
<dbReference type="DIP" id="DIP-32057N"/>
<dbReference type="FunCoup" id="O08788">
    <property type="interactions" value="1871"/>
</dbReference>
<dbReference type="IntAct" id="O08788">
    <property type="interactions" value="42"/>
</dbReference>
<dbReference type="MINT" id="O08788"/>
<dbReference type="STRING" id="10090.ENSMUSP00000109552"/>
<dbReference type="ChEMBL" id="CHEMBL2176787"/>
<dbReference type="GlyGen" id="O08788">
    <property type="glycosylation" value="6 sites, 1 N-linked glycan (1 site), 1 O-linked glycan (3 sites)"/>
</dbReference>
<dbReference type="iPTMnet" id="O08788"/>
<dbReference type="PhosphoSitePlus" id="O08788"/>
<dbReference type="SwissPalm" id="O08788"/>
<dbReference type="jPOST" id="O08788"/>
<dbReference type="PaxDb" id="10090-ENSMUSP00000109552"/>
<dbReference type="PeptideAtlas" id="O08788"/>
<dbReference type="ProteomicsDB" id="279895">
    <molecule id="O08788-1"/>
</dbReference>
<dbReference type="ProteomicsDB" id="279896">
    <molecule id="O08788-2"/>
</dbReference>
<dbReference type="Pumba" id="O08788"/>
<dbReference type="DNASU" id="13191"/>
<dbReference type="Ensembl" id="ENSMUST00000113918.8">
    <molecule id="O08788-2"/>
    <property type="protein sequence ID" value="ENSMUSP00000109551.2"/>
    <property type="gene ID" value="ENSMUSG00000031865.17"/>
</dbReference>
<dbReference type="Ensembl" id="ENSMUST00000113919.10">
    <molecule id="O08788-1"/>
    <property type="protein sequence ID" value="ENSMUSP00000109552.4"/>
    <property type="gene ID" value="ENSMUSG00000031865.17"/>
</dbReference>
<dbReference type="GeneID" id="13191"/>
<dbReference type="KEGG" id="mmu:13191"/>
<dbReference type="UCSC" id="uc009cmz.2">
    <molecule id="O08788-1"/>
    <property type="organism name" value="mouse"/>
</dbReference>
<dbReference type="AGR" id="MGI:107745"/>
<dbReference type="CTD" id="1639"/>
<dbReference type="MGI" id="MGI:107745">
    <property type="gene designation" value="Dctn1"/>
</dbReference>
<dbReference type="VEuPathDB" id="HostDB:ENSMUSG00000031865"/>
<dbReference type="eggNOG" id="KOG0971">
    <property type="taxonomic scope" value="Eukaryota"/>
</dbReference>
<dbReference type="GeneTree" id="ENSGT00940000155378"/>
<dbReference type="InParanoid" id="O08788"/>
<dbReference type="OMA" id="LFEMEPV"/>
<dbReference type="OrthoDB" id="2130750at2759"/>
<dbReference type="PhylomeDB" id="O08788"/>
<dbReference type="TreeFam" id="TF105246"/>
<dbReference type="Reactome" id="R-MMU-2132295">
    <property type="pathway name" value="MHC class II antigen presentation"/>
</dbReference>
<dbReference type="Reactome" id="R-MMU-2565942">
    <property type="pathway name" value="Regulation of PLK1 Activity at G2/M Transition"/>
</dbReference>
<dbReference type="Reactome" id="R-MMU-3371497">
    <property type="pathway name" value="HSP90 chaperone cycle for steroid hormone receptors (SHR) in the presence of ligand"/>
</dbReference>
<dbReference type="Reactome" id="R-MMU-380259">
    <property type="pathway name" value="Loss of Nlp from mitotic centrosomes"/>
</dbReference>
<dbReference type="Reactome" id="R-MMU-380270">
    <property type="pathway name" value="Recruitment of mitotic centrosome proteins and complexes"/>
</dbReference>
<dbReference type="Reactome" id="R-MMU-380284">
    <property type="pathway name" value="Loss of proteins required for interphase microtubule organization from the centrosome"/>
</dbReference>
<dbReference type="Reactome" id="R-MMU-380320">
    <property type="pathway name" value="Recruitment of NuMA to mitotic centrosomes"/>
</dbReference>
<dbReference type="Reactome" id="R-MMU-5620912">
    <property type="pathway name" value="Anchoring of the basal body to the plasma membrane"/>
</dbReference>
<dbReference type="Reactome" id="R-MMU-6807878">
    <property type="pathway name" value="COPI-mediated anterograde transport"/>
</dbReference>
<dbReference type="Reactome" id="R-MMU-6811436">
    <property type="pathway name" value="COPI-independent Golgi-to-ER retrograde traffic"/>
</dbReference>
<dbReference type="Reactome" id="R-MMU-8854518">
    <property type="pathway name" value="AURKA Activation by TPX2"/>
</dbReference>
<dbReference type="BioGRID-ORCS" id="13191">
    <property type="hits" value="13 hits in 79 CRISPR screens"/>
</dbReference>
<dbReference type="CD-CODE" id="01CA17F3">
    <property type="entry name" value="Centrosome"/>
</dbReference>
<dbReference type="CD-CODE" id="CE726F99">
    <property type="entry name" value="Postsynaptic density"/>
</dbReference>
<dbReference type="ChiTaRS" id="Dctn1">
    <property type="organism name" value="mouse"/>
</dbReference>
<dbReference type="PRO" id="PR:O08788"/>
<dbReference type="Proteomes" id="UP000000589">
    <property type="component" value="Chromosome 6"/>
</dbReference>
<dbReference type="RNAct" id="O08788">
    <property type="molecule type" value="protein"/>
</dbReference>
<dbReference type="Bgee" id="ENSMUSG00000031865">
    <property type="expression patterns" value="Expressed in retinal neural layer and 255 other cell types or tissues"/>
</dbReference>
<dbReference type="ExpressionAtlas" id="O08788">
    <property type="expression patterns" value="baseline and differential"/>
</dbReference>
<dbReference type="GO" id="GO:0005938">
    <property type="term" value="C:cell cortex"/>
    <property type="evidence" value="ECO:0000250"/>
    <property type="project" value="UniProtKB"/>
</dbReference>
<dbReference type="GO" id="GO:0099738">
    <property type="term" value="C:cell cortex region"/>
    <property type="evidence" value="ECO:0000250"/>
    <property type="project" value="UniProtKB"/>
</dbReference>
<dbReference type="GO" id="GO:0031252">
    <property type="term" value="C:cell leading edge"/>
    <property type="evidence" value="ECO:0000314"/>
    <property type="project" value="MGI"/>
</dbReference>
<dbReference type="GO" id="GO:0120103">
    <property type="term" value="C:centriolar subdistal appendage"/>
    <property type="evidence" value="ECO:0007669"/>
    <property type="project" value="Ensembl"/>
</dbReference>
<dbReference type="GO" id="GO:0005814">
    <property type="term" value="C:centriole"/>
    <property type="evidence" value="ECO:0000314"/>
    <property type="project" value="UniProtKB"/>
</dbReference>
<dbReference type="GO" id="GO:0005813">
    <property type="term" value="C:centrosome"/>
    <property type="evidence" value="ECO:0000250"/>
    <property type="project" value="UniProtKB"/>
</dbReference>
<dbReference type="GO" id="GO:0036064">
    <property type="term" value="C:ciliary basal body"/>
    <property type="evidence" value="ECO:0000314"/>
    <property type="project" value="MGI"/>
</dbReference>
<dbReference type="GO" id="GO:0005829">
    <property type="term" value="C:cytosol"/>
    <property type="evidence" value="ECO:0007669"/>
    <property type="project" value="Ensembl"/>
</dbReference>
<dbReference type="GO" id="GO:0030286">
    <property type="term" value="C:dynein complex"/>
    <property type="evidence" value="ECO:0007669"/>
    <property type="project" value="UniProtKB-KW"/>
</dbReference>
<dbReference type="GO" id="GO:0045171">
    <property type="term" value="C:intercellular bridge"/>
    <property type="evidence" value="ECO:0007669"/>
    <property type="project" value="Ensembl"/>
</dbReference>
<dbReference type="GO" id="GO:0000776">
    <property type="term" value="C:kinetochore"/>
    <property type="evidence" value="ECO:0000250"/>
    <property type="project" value="UniProtKB"/>
</dbReference>
<dbReference type="GO" id="GO:0035371">
    <property type="term" value="C:microtubule plus-end"/>
    <property type="evidence" value="ECO:0000314"/>
    <property type="project" value="UniProtKB"/>
</dbReference>
<dbReference type="GO" id="GO:0072686">
    <property type="term" value="C:mitotic spindle"/>
    <property type="evidence" value="ECO:0007669"/>
    <property type="project" value="Ensembl"/>
</dbReference>
<dbReference type="GO" id="GO:0043005">
    <property type="term" value="C:neuron projection"/>
    <property type="evidence" value="ECO:0007669"/>
    <property type="project" value="Ensembl"/>
</dbReference>
<dbReference type="GO" id="GO:0043025">
    <property type="term" value="C:neuronal cell body"/>
    <property type="evidence" value="ECO:0007669"/>
    <property type="project" value="Ensembl"/>
</dbReference>
<dbReference type="GO" id="GO:0005635">
    <property type="term" value="C:nuclear envelope"/>
    <property type="evidence" value="ECO:0000250"/>
    <property type="project" value="UniProtKB"/>
</dbReference>
<dbReference type="GO" id="GO:0032991">
    <property type="term" value="C:protein-containing complex"/>
    <property type="evidence" value="ECO:0000314"/>
    <property type="project" value="MGI"/>
</dbReference>
<dbReference type="GO" id="GO:0030904">
    <property type="term" value="C:retromer complex"/>
    <property type="evidence" value="ECO:0007669"/>
    <property type="project" value="Ensembl"/>
</dbReference>
<dbReference type="GO" id="GO:0005819">
    <property type="term" value="C:spindle"/>
    <property type="evidence" value="ECO:0000250"/>
    <property type="project" value="UniProtKB"/>
</dbReference>
<dbReference type="GO" id="GO:0000922">
    <property type="term" value="C:spindle pole"/>
    <property type="evidence" value="ECO:0000314"/>
    <property type="project" value="UniProtKB"/>
</dbReference>
<dbReference type="GO" id="GO:0008017">
    <property type="term" value="F:microtubule binding"/>
    <property type="evidence" value="ECO:0000314"/>
    <property type="project" value="UniProtKB"/>
</dbReference>
<dbReference type="GO" id="GO:0019901">
    <property type="term" value="F:protein kinase binding"/>
    <property type="evidence" value="ECO:0007669"/>
    <property type="project" value="Ensembl"/>
</dbReference>
<dbReference type="GO" id="GO:0051301">
    <property type="term" value="P:cell division"/>
    <property type="evidence" value="ECO:0007669"/>
    <property type="project" value="UniProtKB-KW"/>
</dbReference>
<dbReference type="GO" id="GO:0010457">
    <property type="term" value="P:centriole-centriole cohesion"/>
    <property type="evidence" value="ECO:0000250"/>
    <property type="project" value="UniProtKB"/>
</dbReference>
<dbReference type="GO" id="GO:0031122">
    <property type="term" value="P:cytoplasmic microtubule organization"/>
    <property type="evidence" value="ECO:0000250"/>
    <property type="project" value="UniProtKB"/>
</dbReference>
<dbReference type="GO" id="GO:0000132">
    <property type="term" value="P:establishment of mitotic spindle orientation"/>
    <property type="evidence" value="ECO:0000250"/>
    <property type="project" value="UniProtKB"/>
</dbReference>
<dbReference type="GO" id="GO:0032402">
    <property type="term" value="P:melanosome transport"/>
    <property type="evidence" value="ECO:0000315"/>
    <property type="project" value="MGI"/>
</dbReference>
<dbReference type="GO" id="GO:0034454">
    <property type="term" value="P:microtubule anchoring at centrosome"/>
    <property type="evidence" value="ECO:0000250"/>
    <property type="project" value="UniProtKB"/>
</dbReference>
<dbReference type="GO" id="GO:0061744">
    <property type="term" value="P:motor behavior"/>
    <property type="evidence" value="ECO:0007669"/>
    <property type="project" value="Ensembl"/>
</dbReference>
<dbReference type="GO" id="GO:0007528">
    <property type="term" value="P:neuromuscular junction development"/>
    <property type="evidence" value="ECO:0007669"/>
    <property type="project" value="Ensembl"/>
</dbReference>
<dbReference type="GO" id="GO:0050905">
    <property type="term" value="P:neuromuscular process"/>
    <property type="evidence" value="ECO:0007669"/>
    <property type="project" value="Ensembl"/>
</dbReference>
<dbReference type="GO" id="GO:0070050">
    <property type="term" value="P:neuron cellular homeostasis"/>
    <property type="evidence" value="ECO:0007669"/>
    <property type="project" value="Ensembl"/>
</dbReference>
<dbReference type="GO" id="GO:1990535">
    <property type="term" value="P:neuron projection maintenance"/>
    <property type="evidence" value="ECO:0007669"/>
    <property type="project" value="Ensembl"/>
</dbReference>
<dbReference type="GO" id="GO:1905515">
    <property type="term" value="P:non-motile cilium assembly"/>
    <property type="evidence" value="ECO:0000250"/>
    <property type="project" value="UniProtKB"/>
</dbReference>
<dbReference type="GO" id="GO:0051081">
    <property type="term" value="P:nuclear membrane disassembly"/>
    <property type="evidence" value="ECO:0000250"/>
    <property type="project" value="UniProtKB"/>
</dbReference>
<dbReference type="GO" id="GO:0090316">
    <property type="term" value="P:positive regulation of intracellular protein transport"/>
    <property type="evidence" value="ECO:0000250"/>
    <property type="project" value="UniProtKB"/>
</dbReference>
<dbReference type="GO" id="GO:0090063">
    <property type="term" value="P:positive regulation of microtubule nucleation"/>
    <property type="evidence" value="ECO:0000250"/>
    <property type="project" value="UniProtKB"/>
</dbReference>
<dbReference type="GO" id="GO:0031116">
    <property type="term" value="P:positive regulation of microtubule polymerization"/>
    <property type="evidence" value="ECO:0000250"/>
    <property type="project" value="UniProtKB"/>
</dbReference>
<dbReference type="GO" id="GO:1904398">
    <property type="term" value="P:positive regulation of neuromuscular junction development"/>
    <property type="evidence" value="ECO:0007669"/>
    <property type="project" value="Ensembl"/>
</dbReference>
<dbReference type="GO" id="GO:0060236">
    <property type="term" value="P:regulation of mitotic spindle organization"/>
    <property type="evidence" value="ECO:0000250"/>
    <property type="project" value="UniProtKB"/>
</dbReference>
<dbReference type="GO" id="GO:0042147">
    <property type="term" value="P:retrograde transport, endosome to Golgi"/>
    <property type="evidence" value="ECO:0007669"/>
    <property type="project" value="Ensembl"/>
</dbReference>
<dbReference type="GO" id="GO:0021517">
    <property type="term" value="P:ventral spinal cord development"/>
    <property type="evidence" value="ECO:0007669"/>
    <property type="project" value="Ensembl"/>
</dbReference>
<dbReference type="FunFam" id="2.30.30.190:FF:000003">
    <property type="entry name" value="dynactin subunit 1 isoform X1"/>
    <property type="match status" value="1"/>
</dbReference>
<dbReference type="Gene3D" id="2.30.30.190">
    <property type="entry name" value="CAP Gly-rich-like domain"/>
    <property type="match status" value="1"/>
</dbReference>
<dbReference type="InterPro" id="IPR036859">
    <property type="entry name" value="CAP-Gly_dom_sf"/>
</dbReference>
<dbReference type="InterPro" id="IPR000938">
    <property type="entry name" value="CAP-Gly_domain"/>
</dbReference>
<dbReference type="InterPro" id="IPR022157">
    <property type="entry name" value="Dynactin"/>
</dbReference>
<dbReference type="PANTHER" id="PTHR18916">
    <property type="entry name" value="DYNACTIN 1-RELATED MICROTUBULE-BINDING"/>
    <property type="match status" value="1"/>
</dbReference>
<dbReference type="PANTHER" id="PTHR18916:SF6">
    <property type="entry name" value="DYNACTIN SUBUNIT 1"/>
    <property type="match status" value="1"/>
</dbReference>
<dbReference type="Pfam" id="PF01302">
    <property type="entry name" value="CAP_GLY"/>
    <property type="match status" value="1"/>
</dbReference>
<dbReference type="Pfam" id="PF12455">
    <property type="entry name" value="Dynactin"/>
    <property type="match status" value="1"/>
</dbReference>
<dbReference type="SMART" id="SM01052">
    <property type="entry name" value="CAP_GLY"/>
    <property type="match status" value="1"/>
</dbReference>
<dbReference type="SUPFAM" id="SSF74924">
    <property type="entry name" value="Cap-Gly domain"/>
    <property type="match status" value="1"/>
</dbReference>
<dbReference type="PROSITE" id="PS00845">
    <property type="entry name" value="CAP_GLY_1"/>
    <property type="match status" value="1"/>
</dbReference>
<dbReference type="PROSITE" id="PS50245">
    <property type="entry name" value="CAP_GLY_2"/>
    <property type="match status" value="1"/>
</dbReference>
<protein>
    <recommendedName>
        <fullName>Dynactin subunit 1</fullName>
    </recommendedName>
    <alternativeName>
        <fullName>150 kDa dynein-associated polypeptide</fullName>
    </alternativeName>
    <alternativeName>
        <fullName>DAP-150</fullName>
        <shortName>DP-150</shortName>
    </alternativeName>
    <alternativeName>
        <fullName>p150-glued</fullName>
    </alternativeName>
</protein>
<organism>
    <name type="scientific">Mus musculus</name>
    <name type="common">Mouse</name>
    <dbReference type="NCBI Taxonomy" id="10090"/>
    <lineage>
        <taxon>Eukaryota</taxon>
        <taxon>Metazoa</taxon>
        <taxon>Chordata</taxon>
        <taxon>Craniata</taxon>
        <taxon>Vertebrata</taxon>
        <taxon>Euteleostomi</taxon>
        <taxon>Mammalia</taxon>
        <taxon>Eutheria</taxon>
        <taxon>Euarchontoglires</taxon>
        <taxon>Glires</taxon>
        <taxon>Rodentia</taxon>
        <taxon>Myomorpha</taxon>
        <taxon>Muroidea</taxon>
        <taxon>Muridae</taxon>
        <taxon>Murinae</taxon>
        <taxon>Mus</taxon>
        <taxon>Mus</taxon>
    </lineage>
</organism>